<keyword id="KW-0150">Chloroplast</keyword>
<keyword id="KW-0934">Plastid</keyword>
<keyword id="KW-0687">Ribonucleoprotein</keyword>
<keyword id="KW-0689">Ribosomal protein</keyword>
<proteinExistence type="inferred from homology"/>
<comment type="subunit">
    <text evidence="1">Part of the 50S ribosomal subunit.</text>
</comment>
<comment type="subcellular location">
    <subcellularLocation>
        <location>Plastid</location>
        <location>Chloroplast</location>
    </subcellularLocation>
</comment>
<comment type="similarity">
    <text evidence="2">Belongs to the universal ribosomal protein uL16 family.</text>
</comment>
<protein>
    <recommendedName>
        <fullName evidence="2">Large ribosomal subunit protein uL16c</fullName>
    </recommendedName>
    <alternativeName>
        <fullName>50S ribosomal protein L16, chloroplastic</fullName>
    </alternativeName>
</protein>
<feature type="chain" id="PRO_0000062297" description="Large ribosomal subunit protein uL16c">
    <location>
        <begin position="1" status="less than"/>
        <end position="90"/>
    </location>
</feature>
<feature type="non-terminal residue">
    <location>
        <position position="1"/>
    </location>
</feature>
<organism>
    <name type="scientific">Oenothera ammophila</name>
    <name type="common">Evening primerose</name>
    <dbReference type="NCBI Taxonomy" id="3949"/>
    <lineage>
        <taxon>Eukaryota</taxon>
        <taxon>Viridiplantae</taxon>
        <taxon>Streptophyta</taxon>
        <taxon>Embryophyta</taxon>
        <taxon>Tracheophyta</taxon>
        <taxon>Spermatophyta</taxon>
        <taxon>Magnoliopsida</taxon>
        <taxon>eudicotyledons</taxon>
        <taxon>Gunneridae</taxon>
        <taxon>Pentapetalae</taxon>
        <taxon>rosids</taxon>
        <taxon>malvids</taxon>
        <taxon>Myrtales</taxon>
        <taxon>Onagraceae</taxon>
        <taxon>Onagroideae</taxon>
        <taxon>Onagreae</taxon>
        <taxon>Oenothera</taxon>
    </lineage>
</organism>
<reference key="1">
    <citation type="journal article" date="1991" name="Mol. Biol. Evol.">
        <title>Evidence for replication slippage in the evolution of Oenothera chloroplast DNA.</title>
        <authorList>
            <person name="Wolfson R."/>
            <person name="Higgins K.G."/>
            <person name="Sears B.B."/>
        </authorList>
    </citation>
    <scope>NUCLEOTIDE SEQUENCE [GENOMIC DNA]</scope>
</reference>
<sequence length="90" mass="9942">QIEAGRRAMTRNVRRGGKTWVRIFPDKPVTLRAAETRMGSGKGNPEYWVAVVKPGRILYEMGGVAENIARKAISIAASKMPIRTQFIISG</sequence>
<geneLocation type="chloroplast"/>
<evidence type="ECO:0000250" key="1"/>
<evidence type="ECO:0000305" key="2"/>
<dbReference type="EMBL" id="M60179">
    <property type="status" value="NOT_ANNOTATED_CDS"/>
    <property type="molecule type" value="Genomic_DNA"/>
</dbReference>
<dbReference type="SMR" id="P42355"/>
<dbReference type="GO" id="GO:0009507">
    <property type="term" value="C:chloroplast"/>
    <property type="evidence" value="ECO:0007669"/>
    <property type="project" value="UniProtKB-SubCell"/>
</dbReference>
<dbReference type="GO" id="GO:0005762">
    <property type="term" value="C:mitochondrial large ribosomal subunit"/>
    <property type="evidence" value="ECO:0007669"/>
    <property type="project" value="TreeGrafter"/>
</dbReference>
<dbReference type="GO" id="GO:0019843">
    <property type="term" value="F:rRNA binding"/>
    <property type="evidence" value="ECO:0007669"/>
    <property type="project" value="InterPro"/>
</dbReference>
<dbReference type="GO" id="GO:0003735">
    <property type="term" value="F:structural constituent of ribosome"/>
    <property type="evidence" value="ECO:0007669"/>
    <property type="project" value="InterPro"/>
</dbReference>
<dbReference type="GO" id="GO:0032543">
    <property type="term" value="P:mitochondrial translation"/>
    <property type="evidence" value="ECO:0007669"/>
    <property type="project" value="TreeGrafter"/>
</dbReference>
<dbReference type="CDD" id="cd01433">
    <property type="entry name" value="Ribosomal_L16_L10e"/>
    <property type="match status" value="1"/>
</dbReference>
<dbReference type="Gene3D" id="3.90.1170.10">
    <property type="entry name" value="Ribosomal protein L10e/L16"/>
    <property type="match status" value="1"/>
</dbReference>
<dbReference type="InterPro" id="IPR047873">
    <property type="entry name" value="Ribosomal_uL16"/>
</dbReference>
<dbReference type="InterPro" id="IPR000114">
    <property type="entry name" value="Ribosomal_uL16_bact-type"/>
</dbReference>
<dbReference type="InterPro" id="IPR020798">
    <property type="entry name" value="Ribosomal_uL16_CS"/>
</dbReference>
<dbReference type="InterPro" id="IPR016180">
    <property type="entry name" value="Ribosomal_uL16_dom"/>
</dbReference>
<dbReference type="InterPro" id="IPR036920">
    <property type="entry name" value="Ribosomal_uL16_sf"/>
</dbReference>
<dbReference type="NCBIfam" id="TIGR01164">
    <property type="entry name" value="rplP_bact"/>
    <property type="match status" value="1"/>
</dbReference>
<dbReference type="PANTHER" id="PTHR12220">
    <property type="entry name" value="50S/60S RIBOSOMAL PROTEIN L16"/>
    <property type="match status" value="1"/>
</dbReference>
<dbReference type="PANTHER" id="PTHR12220:SF13">
    <property type="entry name" value="LARGE RIBOSOMAL SUBUNIT PROTEIN UL16M"/>
    <property type="match status" value="1"/>
</dbReference>
<dbReference type="Pfam" id="PF00252">
    <property type="entry name" value="Ribosomal_L16"/>
    <property type="match status" value="1"/>
</dbReference>
<dbReference type="PRINTS" id="PR00060">
    <property type="entry name" value="RIBOSOMALL16"/>
</dbReference>
<dbReference type="SUPFAM" id="SSF54686">
    <property type="entry name" value="Ribosomal protein L16p/L10e"/>
    <property type="match status" value="1"/>
</dbReference>
<dbReference type="PROSITE" id="PS00701">
    <property type="entry name" value="RIBOSOMAL_L16_2"/>
    <property type="match status" value="1"/>
</dbReference>
<accession>P42355</accession>
<name>RK16_OENAM</name>
<gene>
    <name type="primary">rpl16</name>
</gene>